<evidence type="ECO:0000250" key="1"/>
<evidence type="ECO:0000255" key="2"/>
<evidence type="ECO:0000256" key="3">
    <source>
        <dbReference type="SAM" id="MobiDB-lite"/>
    </source>
</evidence>
<evidence type="ECO:0000305" key="4"/>
<evidence type="ECO:0007744" key="5">
    <source>
    </source>
</evidence>
<name>LCAT4_ARATH</name>
<accession>Q71N54</accession>
<accession>O81867</accession>
<reference key="1">
    <citation type="journal article" date="2004" name="Eur. J. Biochem.">
        <title>Expression in yeast of a novel phospholipase A1 cDNA from Arabidopsis thaliana.</title>
        <authorList>
            <person name="Noiriel A."/>
            <person name="Benveniste P."/>
            <person name="Banas A."/>
            <person name="Stymne S."/>
            <person name="Bouvier-Nave P."/>
        </authorList>
    </citation>
    <scope>NUCLEOTIDE SEQUENCE [MRNA]</scope>
</reference>
<reference key="2">
    <citation type="journal article" date="1999" name="Nature">
        <title>Sequence and analysis of chromosome 4 of the plant Arabidopsis thaliana.</title>
        <authorList>
            <person name="Mayer K.F.X."/>
            <person name="Schueller C."/>
            <person name="Wambutt R."/>
            <person name="Murphy G."/>
            <person name="Volckaert G."/>
            <person name="Pohl T."/>
            <person name="Duesterhoeft A."/>
            <person name="Stiekema W."/>
            <person name="Entian K.-D."/>
            <person name="Terryn N."/>
            <person name="Harris B."/>
            <person name="Ansorge W."/>
            <person name="Brandt P."/>
            <person name="Grivell L.A."/>
            <person name="Rieger M."/>
            <person name="Weichselgartner M."/>
            <person name="de Simone V."/>
            <person name="Obermaier B."/>
            <person name="Mache R."/>
            <person name="Mueller M."/>
            <person name="Kreis M."/>
            <person name="Delseny M."/>
            <person name="Puigdomenech P."/>
            <person name="Watson M."/>
            <person name="Schmidtheini T."/>
            <person name="Reichert B."/>
            <person name="Portetelle D."/>
            <person name="Perez-Alonso M."/>
            <person name="Boutry M."/>
            <person name="Bancroft I."/>
            <person name="Vos P."/>
            <person name="Hoheisel J."/>
            <person name="Zimmermann W."/>
            <person name="Wedler H."/>
            <person name="Ridley P."/>
            <person name="Langham S.-A."/>
            <person name="McCullagh B."/>
            <person name="Bilham L."/>
            <person name="Robben J."/>
            <person name="van der Schueren J."/>
            <person name="Grymonprez B."/>
            <person name="Chuang Y.-J."/>
            <person name="Vandenbussche F."/>
            <person name="Braeken M."/>
            <person name="Weltjens I."/>
            <person name="Voet M."/>
            <person name="Bastiaens I."/>
            <person name="Aert R."/>
            <person name="Defoor E."/>
            <person name="Weitzenegger T."/>
            <person name="Bothe G."/>
            <person name="Ramsperger U."/>
            <person name="Hilbert H."/>
            <person name="Braun M."/>
            <person name="Holzer E."/>
            <person name="Brandt A."/>
            <person name="Peters S."/>
            <person name="van Staveren M."/>
            <person name="Dirkse W."/>
            <person name="Mooijman P."/>
            <person name="Klein Lankhorst R."/>
            <person name="Rose M."/>
            <person name="Hauf J."/>
            <person name="Koetter P."/>
            <person name="Berneiser S."/>
            <person name="Hempel S."/>
            <person name="Feldpausch M."/>
            <person name="Lamberth S."/>
            <person name="Van den Daele H."/>
            <person name="De Keyser A."/>
            <person name="Buysshaert C."/>
            <person name="Gielen J."/>
            <person name="Villarroel R."/>
            <person name="De Clercq R."/>
            <person name="van Montagu M."/>
            <person name="Rogers J."/>
            <person name="Cronin A."/>
            <person name="Quail M.A."/>
            <person name="Bray-Allen S."/>
            <person name="Clark L."/>
            <person name="Doggett J."/>
            <person name="Hall S."/>
            <person name="Kay M."/>
            <person name="Lennard N."/>
            <person name="McLay K."/>
            <person name="Mayes R."/>
            <person name="Pettett A."/>
            <person name="Rajandream M.A."/>
            <person name="Lyne M."/>
            <person name="Benes V."/>
            <person name="Rechmann S."/>
            <person name="Borkova D."/>
            <person name="Bloecker H."/>
            <person name="Scharfe M."/>
            <person name="Grimm M."/>
            <person name="Loehnert T.-H."/>
            <person name="Dose S."/>
            <person name="de Haan M."/>
            <person name="Maarse A.C."/>
            <person name="Schaefer M."/>
            <person name="Mueller-Auer S."/>
            <person name="Gabel C."/>
            <person name="Fuchs M."/>
            <person name="Fartmann B."/>
            <person name="Granderath K."/>
            <person name="Dauner D."/>
            <person name="Herzl A."/>
            <person name="Neumann S."/>
            <person name="Argiriou A."/>
            <person name="Vitale D."/>
            <person name="Liguori R."/>
            <person name="Piravandi E."/>
            <person name="Massenet O."/>
            <person name="Quigley F."/>
            <person name="Clabauld G."/>
            <person name="Muendlein A."/>
            <person name="Felber R."/>
            <person name="Schnabl S."/>
            <person name="Hiller R."/>
            <person name="Schmidt W."/>
            <person name="Lecharny A."/>
            <person name="Aubourg S."/>
            <person name="Chefdor F."/>
            <person name="Cooke R."/>
            <person name="Berger C."/>
            <person name="Monfort A."/>
            <person name="Casacuberta E."/>
            <person name="Gibbons T."/>
            <person name="Weber N."/>
            <person name="Vandenbol M."/>
            <person name="Bargues M."/>
            <person name="Terol J."/>
            <person name="Torres A."/>
            <person name="Perez-Perez A."/>
            <person name="Purnelle B."/>
            <person name="Bent E."/>
            <person name="Johnson S."/>
            <person name="Tacon D."/>
            <person name="Jesse T."/>
            <person name="Heijnen L."/>
            <person name="Schwarz S."/>
            <person name="Scholler P."/>
            <person name="Heber S."/>
            <person name="Francs P."/>
            <person name="Bielke C."/>
            <person name="Frishman D."/>
            <person name="Haase D."/>
            <person name="Lemcke K."/>
            <person name="Mewes H.-W."/>
            <person name="Stocker S."/>
            <person name="Zaccaria P."/>
            <person name="Bevan M."/>
            <person name="Wilson R.K."/>
            <person name="de la Bastide M."/>
            <person name="Habermann K."/>
            <person name="Parnell L."/>
            <person name="Dedhia N."/>
            <person name="Gnoj L."/>
            <person name="Schutz K."/>
            <person name="Huang E."/>
            <person name="Spiegel L."/>
            <person name="Sekhon M."/>
            <person name="Murray J."/>
            <person name="Sheet P."/>
            <person name="Cordes M."/>
            <person name="Abu-Threideh J."/>
            <person name="Stoneking T."/>
            <person name="Kalicki J."/>
            <person name="Graves T."/>
            <person name="Harmon G."/>
            <person name="Edwards J."/>
            <person name="Latreille P."/>
            <person name="Courtney L."/>
            <person name="Cloud J."/>
            <person name="Abbott A."/>
            <person name="Scott K."/>
            <person name="Johnson D."/>
            <person name="Minx P."/>
            <person name="Bentley D."/>
            <person name="Fulton B."/>
            <person name="Miller N."/>
            <person name="Greco T."/>
            <person name="Kemp K."/>
            <person name="Kramer J."/>
            <person name="Fulton L."/>
            <person name="Mardis E."/>
            <person name="Dante M."/>
            <person name="Pepin K."/>
            <person name="Hillier L.W."/>
            <person name="Nelson J."/>
            <person name="Spieth J."/>
            <person name="Ryan E."/>
            <person name="Andrews S."/>
            <person name="Geisel C."/>
            <person name="Layman D."/>
            <person name="Du H."/>
            <person name="Ali J."/>
            <person name="Berghoff A."/>
            <person name="Jones K."/>
            <person name="Drone K."/>
            <person name="Cotton M."/>
            <person name="Joshu C."/>
            <person name="Antonoiu B."/>
            <person name="Zidanic M."/>
            <person name="Strong C."/>
            <person name="Sun H."/>
            <person name="Lamar B."/>
            <person name="Yordan C."/>
            <person name="Ma P."/>
            <person name="Zhong J."/>
            <person name="Preston R."/>
            <person name="Vil D."/>
            <person name="Shekher M."/>
            <person name="Matero A."/>
            <person name="Shah R."/>
            <person name="Swaby I.K."/>
            <person name="O'Shaughnessy A."/>
            <person name="Rodriguez M."/>
            <person name="Hoffman J."/>
            <person name="Till S."/>
            <person name="Granat S."/>
            <person name="Shohdy N."/>
            <person name="Hasegawa A."/>
            <person name="Hameed A."/>
            <person name="Lodhi M."/>
            <person name="Johnson A."/>
            <person name="Chen E."/>
            <person name="Marra M.A."/>
            <person name="Martienssen R."/>
            <person name="McCombie W.R."/>
        </authorList>
    </citation>
    <scope>NUCLEOTIDE SEQUENCE [LARGE SCALE GENOMIC DNA]</scope>
    <source>
        <strain>cv. Columbia</strain>
    </source>
</reference>
<reference key="3">
    <citation type="journal article" date="2017" name="Plant J.">
        <title>Araport11: a complete reannotation of the Arabidopsis thaliana reference genome.</title>
        <authorList>
            <person name="Cheng C.Y."/>
            <person name="Krishnakumar V."/>
            <person name="Chan A.P."/>
            <person name="Thibaud-Nissen F."/>
            <person name="Schobel S."/>
            <person name="Town C.D."/>
        </authorList>
    </citation>
    <scope>GENOME REANNOTATION</scope>
    <source>
        <strain>cv. Columbia</strain>
    </source>
</reference>
<reference key="4">
    <citation type="submission" date="2005-05" db="EMBL/GenBank/DDBJ databases">
        <title>Arabidopsis ORF clones.</title>
        <authorList>
            <person name="Cheuk R."/>
            <person name="Chen H."/>
            <person name="Kim C.J."/>
            <person name="Shinn P."/>
            <person name="Ecker J.R."/>
        </authorList>
    </citation>
    <scope>NUCLEOTIDE SEQUENCE [LARGE SCALE MRNA]</scope>
    <source>
        <strain>cv. Columbia</strain>
    </source>
</reference>
<reference key="5">
    <citation type="journal article" date="2012" name="Mol. Cell. Proteomics">
        <title>Comparative large-scale characterisation of plant vs. mammal proteins reveals similar and idiosyncratic N-alpha acetylation features.</title>
        <authorList>
            <person name="Bienvenut W.V."/>
            <person name="Sumpton D."/>
            <person name="Martinez A."/>
            <person name="Lilla S."/>
            <person name="Espagne C."/>
            <person name="Meinnel T."/>
            <person name="Giglione C."/>
        </authorList>
    </citation>
    <scope>ACETYLATION [LARGE SCALE ANALYSIS] AT SER-2</scope>
    <scope>CLEAVAGE OF INITIATOR METHIONINE [LARGE SCALE ANALYSIS]</scope>
    <scope>IDENTIFICATION BY MASS SPECTROMETRY [LARGE SCALE ANALYSIS]</scope>
</reference>
<sequence length="535" mass="60431">MSLLLEEIIRSVEALLKLRNRNQEPYVDPNLNPVLLVPGIAGSILNAVDHENGNEERVWVRIFGADHEFRTKMWSRFDPSTGKTISLDPKTSIVVPQDRAGLHAIDVLDPDMIVGRESVYYFHEMIVEMIGWGFEEGKTLFGFGYDFRQSNRLQETLDQFAKKLETVYKASGEKKINVISHSMGGLLVKCFMGLHSDIFEKYVQNWIAIAAPFRGAPGYITSTLLNGMSFVNGWEQNFFVSKWSMHQLLIECPSIYELMCCPYFKWELPPVLELWREKESNDGVGTSYVVLESYCSLESLEVFTKSLSNNTADYCGESIDLPFNWKIMEWAHKTKQVLASAKLPPKVKFYNIYGTNLETPHSVCYGNEKMPVKDLTNLRYFQPTYICVDGDGTVPMESAMADGLEAVARVGVPGEHRGILNDHRVFRMLKKWLNVGEPDPFYNPVNDYVILPTTYEFEKFHENGLEVASVKESWDIISDDNNIGTTGSTVNSISVSQPGDDQNPQAEARATLTVQPQSDGRQHVELNAVSVSVDA</sequence>
<feature type="initiator methionine" description="Removed" evidence="5">
    <location>
        <position position="1"/>
    </location>
</feature>
<feature type="chain" id="PRO_0000398822" description="Lecithin-cholesterol acyltransferase-like 4">
    <location>
        <begin position="2"/>
        <end position="535"/>
    </location>
</feature>
<feature type="region of interest" description="Disordered" evidence="3">
    <location>
        <begin position="488"/>
        <end position="507"/>
    </location>
</feature>
<feature type="compositionally biased region" description="Polar residues" evidence="3">
    <location>
        <begin position="488"/>
        <end position="505"/>
    </location>
</feature>
<feature type="active site" description="Acyl-ester intermediate" evidence="2">
    <location>
        <position position="182"/>
    </location>
</feature>
<feature type="active site" description="Charge relay system" evidence="1">
    <location>
        <position position="391"/>
    </location>
</feature>
<feature type="active site" description="Charge relay system" evidence="1">
    <location>
        <position position="416"/>
    </location>
</feature>
<feature type="modified residue" description="N-acetylserine" evidence="5">
    <location>
        <position position="2"/>
    </location>
</feature>
<keyword id="KW-0007">Acetylation</keyword>
<keyword id="KW-0012">Acyltransferase</keyword>
<keyword id="KW-1185">Reference proteome</keyword>
<keyword id="KW-0808">Transferase</keyword>
<gene>
    <name type="primary">LCAT4</name>
    <name type="ordered locus">At4g19860</name>
    <name type="ORF">T16H5.220</name>
</gene>
<comment type="similarity">
    <text evidence="4">Belongs to the AB hydrolase superfamily. Lipase family.</text>
</comment>
<comment type="sequence caution" evidence="4">
    <conflict type="erroneous gene model prediction">
        <sequence resource="EMBL-CDS" id="CAA19703"/>
    </conflict>
</comment>
<comment type="sequence caution" evidence="4">
    <conflict type="erroneous gene model prediction">
        <sequence resource="EMBL-CDS" id="CAB78988"/>
    </conflict>
</comment>
<dbReference type="EC" id="2.3.1.-"/>
<dbReference type="EMBL" id="AF421149">
    <property type="protein sequence ID" value="AAQ04052.1"/>
    <property type="molecule type" value="mRNA"/>
</dbReference>
<dbReference type="EMBL" id="AL024486">
    <property type="protein sequence ID" value="CAA19703.1"/>
    <property type="status" value="ALT_SEQ"/>
    <property type="molecule type" value="Genomic_DNA"/>
</dbReference>
<dbReference type="EMBL" id="AL161551">
    <property type="protein sequence ID" value="CAB78988.1"/>
    <property type="status" value="ALT_SEQ"/>
    <property type="molecule type" value="Genomic_DNA"/>
</dbReference>
<dbReference type="EMBL" id="CP002687">
    <property type="protein sequence ID" value="AEE84235.1"/>
    <property type="molecule type" value="Genomic_DNA"/>
</dbReference>
<dbReference type="EMBL" id="BT022028">
    <property type="protein sequence ID" value="AAY25440.1"/>
    <property type="molecule type" value="mRNA"/>
</dbReference>
<dbReference type="PIR" id="T04767">
    <property type="entry name" value="T04767"/>
</dbReference>
<dbReference type="RefSeq" id="NP_193721.2">
    <property type="nucleotide sequence ID" value="NM_118106.4"/>
</dbReference>
<dbReference type="SMR" id="Q71N54"/>
<dbReference type="FunCoup" id="Q71N54">
    <property type="interactions" value="711"/>
</dbReference>
<dbReference type="STRING" id="3702.Q71N54"/>
<dbReference type="ESTHER" id="arath-LCAT4">
    <property type="family name" value="PC-sterol_acyltransferase"/>
</dbReference>
<dbReference type="iPTMnet" id="Q71N54"/>
<dbReference type="PaxDb" id="3702-AT4G19860.1"/>
<dbReference type="ProteomicsDB" id="237058"/>
<dbReference type="EnsemblPlants" id="AT4G19860.1">
    <property type="protein sequence ID" value="AT4G19860.1"/>
    <property type="gene ID" value="AT4G19860"/>
</dbReference>
<dbReference type="GeneID" id="827730"/>
<dbReference type="Gramene" id="AT4G19860.1">
    <property type="protein sequence ID" value="AT4G19860.1"/>
    <property type="gene ID" value="AT4G19860"/>
</dbReference>
<dbReference type="KEGG" id="ath:AT4G19860"/>
<dbReference type="Araport" id="AT4G19860"/>
<dbReference type="TAIR" id="AT4G19860"/>
<dbReference type="eggNOG" id="KOG2369">
    <property type="taxonomic scope" value="Eukaryota"/>
</dbReference>
<dbReference type="HOGENOM" id="CLU_035096_0_0_1"/>
<dbReference type="InParanoid" id="Q71N54"/>
<dbReference type="OMA" id="CEHHVFR"/>
<dbReference type="PhylomeDB" id="Q71N54"/>
<dbReference type="BioCyc" id="ARA:AT4G19860-MONOMER"/>
<dbReference type="PRO" id="PR:Q71N54"/>
<dbReference type="Proteomes" id="UP000006548">
    <property type="component" value="Chromosome 4"/>
</dbReference>
<dbReference type="ExpressionAtlas" id="Q71N54">
    <property type="expression patterns" value="baseline and differential"/>
</dbReference>
<dbReference type="GO" id="GO:0005829">
    <property type="term" value="C:cytosol"/>
    <property type="evidence" value="ECO:0000314"/>
    <property type="project" value="TAIR"/>
</dbReference>
<dbReference type="GO" id="GO:0008374">
    <property type="term" value="F:O-acyltransferase activity"/>
    <property type="evidence" value="ECO:0007669"/>
    <property type="project" value="InterPro"/>
</dbReference>
<dbReference type="GO" id="GO:0004620">
    <property type="term" value="F:phospholipase activity"/>
    <property type="evidence" value="ECO:0000314"/>
    <property type="project" value="TAIR"/>
</dbReference>
<dbReference type="GO" id="GO:0009395">
    <property type="term" value="P:phospholipid catabolic process"/>
    <property type="evidence" value="ECO:0000314"/>
    <property type="project" value="TAIR"/>
</dbReference>
<dbReference type="Gene3D" id="3.40.50.1820">
    <property type="entry name" value="alpha/beta hydrolase"/>
    <property type="match status" value="1"/>
</dbReference>
<dbReference type="InterPro" id="IPR029058">
    <property type="entry name" value="AB_hydrolase_fold"/>
</dbReference>
<dbReference type="InterPro" id="IPR003386">
    <property type="entry name" value="LACT/PDAT_acylTrfase"/>
</dbReference>
<dbReference type="PANTHER" id="PTHR11440">
    <property type="entry name" value="LECITHIN-CHOLESTEROL ACYLTRANSFERASE-RELATED"/>
    <property type="match status" value="1"/>
</dbReference>
<dbReference type="Pfam" id="PF02450">
    <property type="entry name" value="LCAT"/>
    <property type="match status" value="1"/>
</dbReference>
<dbReference type="SUPFAM" id="SSF53474">
    <property type="entry name" value="alpha/beta-Hydrolases"/>
    <property type="match status" value="1"/>
</dbReference>
<protein>
    <recommendedName>
        <fullName>Lecithin-cholesterol acyltransferase-like 4</fullName>
        <ecNumber>2.3.1.-</ecNumber>
    </recommendedName>
</protein>
<organism>
    <name type="scientific">Arabidopsis thaliana</name>
    <name type="common">Mouse-ear cress</name>
    <dbReference type="NCBI Taxonomy" id="3702"/>
    <lineage>
        <taxon>Eukaryota</taxon>
        <taxon>Viridiplantae</taxon>
        <taxon>Streptophyta</taxon>
        <taxon>Embryophyta</taxon>
        <taxon>Tracheophyta</taxon>
        <taxon>Spermatophyta</taxon>
        <taxon>Magnoliopsida</taxon>
        <taxon>eudicotyledons</taxon>
        <taxon>Gunneridae</taxon>
        <taxon>Pentapetalae</taxon>
        <taxon>rosids</taxon>
        <taxon>malvids</taxon>
        <taxon>Brassicales</taxon>
        <taxon>Brassicaceae</taxon>
        <taxon>Camelineae</taxon>
        <taxon>Arabidopsis</taxon>
    </lineage>
</organism>
<proteinExistence type="evidence at protein level"/>